<keyword id="KW-0903">Direct protein sequencing</keyword>
<keyword id="KW-1185">Reference proteome</keyword>
<keyword id="KW-0346">Stress response</keyword>
<comment type="induction">
    <text>By heat shock, salt stress, oxidative stress, glucose limitation and oxygen limitation.</text>
</comment>
<sequence>MKPVVKEYTNDEQLMKDVEELQKMGVAKEDVYVLAHDDDRTERLADNTNANTIGAKETGFKHAVGNIFNKKGDELRNKIHEIGFSEDEAAQFEKRLDEGKVLLFVTDNEKVKAWA</sequence>
<feature type="chain" id="PRO_0000050078" description="General stress protein 17M">
    <location>
        <begin position="1"/>
        <end position="115"/>
    </location>
</feature>
<dbReference type="EMBL" id="D86417">
    <property type="protein sequence ID" value="BAA22314.1"/>
    <property type="molecule type" value="Genomic_DNA"/>
</dbReference>
<dbReference type="EMBL" id="AL009126">
    <property type="protein sequence ID" value="CAB12584.1"/>
    <property type="molecule type" value="Genomic_DNA"/>
</dbReference>
<dbReference type="PIR" id="G69811">
    <property type="entry name" value="G69811"/>
</dbReference>
<dbReference type="RefSeq" id="NP_388636.1">
    <property type="nucleotide sequence ID" value="NC_000964.3"/>
</dbReference>
<dbReference type="RefSeq" id="WP_003233729.1">
    <property type="nucleotide sequence ID" value="NZ_OZ025638.1"/>
</dbReference>
<dbReference type="SMR" id="P80241"/>
<dbReference type="FunCoup" id="P80241">
    <property type="interactions" value="82"/>
</dbReference>
<dbReference type="STRING" id="224308.BSU07550"/>
<dbReference type="PaxDb" id="224308-BSU07550"/>
<dbReference type="EnsemblBacteria" id="CAB12584">
    <property type="protein sequence ID" value="CAB12584"/>
    <property type="gene ID" value="BSU_07550"/>
</dbReference>
<dbReference type="GeneID" id="938794"/>
<dbReference type="KEGG" id="bsu:BSU07550"/>
<dbReference type="PATRIC" id="fig|224308.179.peg.820"/>
<dbReference type="eggNOG" id="ENOG5032UC2">
    <property type="taxonomic scope" value="Bacteria"/>
</dbReference>
<dbReference type="InParanoid" id="P80241"/>
<dbReference type="OrthoDB" id="2353304at2"/>
<dbReference type="BioCyc" id="BSUB:BSU07550-MONOMER"/>
<dbReference type="Proteomes" id="UP000001570">
    <property type="component" value="Chromosome"/>
</dbReference>
<dbReference type="InterPro" id="IPR025889">
    <property type="entry name" value="GSP17M-like_dom"/>
</dbReference>
<dbReference type="Pfam" id="PF11181">
    <property type="entry name" value="YflT"/>
    <property type="match status" value="1"/>
</dbReference>
<accession>P80241</accession>
<reference key="1">
    <citation type="journal article" date="1997" name="Gene">
        <title>Cloning and sequencing of a 35.7 kb in the 70 degree-73 degree region of the Bacillus subtilis genome reveal genes for a new two-component system, three spore germination proteins, an iron uptake system and a general stress response protein.</title>
        <authorList>
            <person name="Yamamoto H."/>
            <person name="Uchiyama S."/>
            <person name="Nugroho F.A."/>
            <person name="Sekiguchi J."/>
        </authorList>
    </citation>
    <scope>NUCLEOTIDE SEQUENCE [GENOMIC DNA]</scope>
    <source>
        <strain>168 / AC327</strain>
    </source>
</reference>
<reference key="2">
    <citation type="journal article" date="1997" name="Nature">
        <title>The complete genome sequence of the Gram-positive bacterium Bacillus subtilis.</title>
        <authorList>
            <person name="Kunst F."/>
            <person name="Ogasawara N."/>
            <person name="Moszer I."/>
            <person name="Albertini A.M."/>
            <person name="Alloni G."/>
            <person name="Azevedo V."/>
            <person name="Bertero M.G."/>
            <person name="Bessieres P."/>
            <person name="Bolotin A."/>
            <person name="Borchert S."/>
            <person name="Borriss R."/>
            <person name="Boursier L."/>
            <person name="Brans A."/>
            <person name="Braun M."/>
            <person name="Brignell S.C."/>
            <person name="Bron S."/>
            <person name="Brouillet S."/>
            <person name="Bruschi C.V."/>
            <person name="Caldwell B."/>
            <person name="Capuano V."/>
            <person name="Carter N.M."/>
            <person name="Choi S.-K."/>
            <person name="Codani J.-J."/>
            <person name="Connerton I.F."/>
            <person name="Cummings N.J."/>
            <person name="Daniel R.A."/>
            <person name="Denizot F."/>
            <person name="Devine K.M."/>
            <person name="Duesterhoeft A."/>
            <person name="Ehrlich S.D."/>
            <person name="Emmerson P.T."/>
            <person name="Entian K.-D."/>
            <person name="Errington J."/>
            <person name="Fabret C."/>
            <person name="Ferrari E."/>
            <person name="Foulger D."/>
            <person name="Fritz C."/>
            <person name="Fujita M."/>
            <person name="Fujita Y."/>
            <person name="Fuma S."/>
            <person name="Galizzi A."/>
            <person name="Galleron N."/>
            <person name="Ghim S.-Y."/>
            <person name="Glaser P."/>
            <person name="Goffeau A."/>
            <person name="Golightly E.J."/>
            <person name="Grandi G."/>
            <person name="Guiseppi G."/>
            <person name="Guy B.J."/>
            <person name="Haga K."/>
            <person name="Haiech J."/>
            <person name="Harwood C.R."/>
            <person name="Henaut A."/>
            <person name="Hilbert H."/>
            <person name="Holsappel S."/>
            <person name="Hosono S."/>
            <person name="Hullo M.-F."/>
            <person name="Itaya M."/>
            <person name="Jones L.-M."/>
            <person name="Joris B."/>
            <person name="Karamata D."/>
            <person name="Kasahara Y."/>
            <person name="Klaerr-Blanchard M."/>
            <person name="Klein C."/>
            <person name="Kobayashi Y."/>
            <person name="Koetter P."/>
            <person name="Koningstein G."/>
            <person name="Krogh S."/>
            <person name="Kumano M."/>
            <person name="Kurita K."/>
            <person name="Lapidus A."/>
            <person name="Lardinois S."/>
            <person name="Lauber J."/>
            <person name="Lazarevic V."/>
            <person name="Lee S.-M."/>
            <person name="Levine A."/>
            <person name="Liu H."/>
            <person name="Masuda S."/>
            <person name="Mauel C."/>
            <person name="Medigue C."/>
            <person name="Medina N."/>
            <person name="Mellado R.P."/>
            <person name="Mizuno M."/>
            <person name="Moestl D."/>
            <person name="Nakai S."/>
            <person name="Noback M."/>
            <person name="Noone D."/>
            <person name="O'Reilly M."/>
            <person name="Ogawa K."/>
            <person name="Ogiwara A."/>
            <person name="Oudega B."/>
            <person name="Park S.-H."/>
            <person name="Parro V."/>
            <person name="Pohl T.M."/>
            <person name="Portetelle D."/>
            <person name="Porwollik S."/>
            <person name="Prescott A.M."/>
            <person name="Presecan E."/>
            <person name="Pujic P."/>
            <person name="Purnelle B."/>
            <person name="Rapoport G."/>
            <person name="Rey M."/>
            <person name="Reynolds S."/>
            <person name="Rieger M."/>
            <person name="Rivolta C."/>
            <person name="Rocha E."/>
            <person name="Roche B."/>
            <person name="Rose M."/>
            <person name="Sadaie Y."/>
            <person name="Sato T."/>
            <person name="Scanlan E."/>
            <person name="Schleich S."/>
            <person name="Schroeter R."/>
            <person name="Scoffone F."/>
            <person name="Sekiguchi J."/>
            <person name="Sekowska A."/>
            <person name="Seror S.J."/>
            <person name="Serror P."/>
            <person name="Shin B.-S."/>
            <person name="Soldo B."/>
            <person name="Sorokin A."/>
            <person name="Tacconi E."/>
            <person name="Takagi T."/>
            <person name="Takahashi H."/>
            <person name="Takemaru K."/>
            <person name="Takeuchi M."/>
            <person name="Tamakoshi A."/>
            <person name="Tanaka T."/>
            <person name="Terpstra P."/>
            <person name="Tognoni A."/>
            <person name="Tosato V."/>
            <person name="Uchiyama S."/>
            <person name="Vandenbol M."/>
            <person name="Vannier F."/>
            <person name="Vassarotti A."/>
            <person name="Viari A."/>
            <person name="Wambutt R."/>
            <person name="Wedler E."/>
            <person name="Wedler H."/>
            <person name="Weitzenegger T."/>
            <person name="Winters P."/>
            <person name="Wipat A."/>
            <person name="Yamamoto H."/>
            <person name="Yamane K."/>
            <person name="Yasumoto K."/>
            <person name="Yata K."/>
            <person name="Yoshida K."/>
            <person name="Yoshikawa H.-F."/>
            <person name="Zumstein E."/>
            <person name="Yoshikawa H."/>
            <person name="Danchin A."/>
        </authorList>
    </citation>
    <scope>NUCLEOTIDE SEQUENCE [LARGE SCALE GENOMIC DNA]</scope>
    <source>
        <strain>168</strain>
    </source>
</reference>
<reference key="3">
    <citation type="journal article" date="1994" name="Microbiology">
        <title>Analysis of the induction of general stress proteins of Bacillus subtilis.</title>
        <authorList>
            <person name="Voelker U."/>
            <person name="Engelmann S."/>
            <person name="Maul B."/>
            <person name="Riethdorf S."/>
            <person name="Voelker A."/>
            <person name="Schmid R."/>
            <person name="Mach H."/>
            <person name="Hecker M."/>
        </authorList>
    </citation>
    <scope>PROTEIN SEQUENCE OF 1-21</scope>
    <source>
        <strain>168 / IS58</strain>
    </source>
</reference>
<name>G17M_BACSU</name>
<organism>
    <name type="scientific">Bacillus subtilis (strain 168)</name>
    <dbReference type="NCBI Taxonomy" id="224308"/>
    <lineage>
        <taxon>Bacteria</taxon>
        <taxon>Bacillati</taxon>
        <taxon>Bacillota</taxon>
        <taxon>Bacilli</taxon>
        <taxon>Bacillales</taxon>
        <taxon>Bacillaceae</taxon>
        <taxon>Bacillus</taxon>
    </lineage>
</organism>
<proteinExistence type="evidence at protein level"/>
<protein>
    <recommendedName>
        <fullName>General stress protein 17M</fullName>
        <shortName>GSP17M</shortName>
    </recommendedName>
</protein>
<gene>
    <name type="primary">yflT</name>
    <name type="ordered locus">BSU07550</name>
</gene>